<keyword id="KW-0256">Endoplasmic reticulum</keyword>
<keyword id="KW-0472">Membrane</keyword>
<keyword id="KW-0520">NAD</keyword>
<keyword id="KW-0521">NADP</keyword>
<keyword id="KW-0560">Oxidoreductase</keyword>
<keyword id="KW-1185">Reference proteome</keyword>
<keyword id="KW-0732">Signal</keyword>
<proteinExistence type="evidence at protein level"/>
<dbReference type="EC" id="1.1.1.-" evidence="2"/>
<dbReference type="EMBL" id="AK014100">
    <property type="protein sequence ID" value="BAB29156.1"/>
    <property type="status" value="ALT_FRAME"/>
    <property type="molecule type" value="mRNA"/>
</dbReference>
<dbReference type="EMBL" id="BC016189">
    <property type="protein sequence ID" value="AAH16189.1"/>
    <property type="status" value="ALT_INIT"/>
    <property type="molecule type" value="mRNA"/>
</dbReference>
<dbReference type="CCDS" id="CCDS49086.1"/>
<dbReference type="RefSeq" id="NP_079798.2">
    <property type="nucleotide sequence ID" value="NM_025522.5"/>
</dbReference>
<dbReference type="SMR" id="Q9CXR1"/>
<dbReference type="BioGRID" id="211424">
    <property type="interactions" value="6"/>
</dbReference>
<dbReference type="FunCoup" id="Q9CXR1">
    <property type="interactions" value="514"/>
</dbReference>
<dbReference type="STRING" id="10090.ENSMUSP00000021512"/>
<dbReference type="GlyGen" id="Q9CXR1">
    <property type="glycosylation" value="1 site, 1 O-linked glycan (1 site)"/>
</dbReference>
<dbReference type="iPTMnet" id="Q9CXR1"/>
<dbReference type="PhosphoSitePlus" id="Q9CXR1"/>
<dbReference type="SwissPalm" id="Q9CXR1"/>
<dbReference type="jPOST" id="Q9CXR1"/>
<dbReference type="PaxDb" id="10090-ENSMUSP00000021512"/>
<dbReference type="PeptideAtlas" id="Q9CXR1"/>
<dbReference type="ProteomicsDB" id="277336"/>
<dbReference type="Pumba" id="Q9CXR1"/>
<dbReference type="DNASU" id="66375"/>
<dbReference type="Ensembl" id="ENSMUST00000021512.11">
    <property type="protein sequence ID" value="ENSMUSP00000021512.10"/>
    <property type="gene ID" value="ENSMUSG00000021094.11"/>
</dbReference>
<dbReference type="GeneID" id="66375"/>
<dbReference type="KEGG" id="mmu:66375"/>
<dbReference type="UCSC" id="uc007nvs.2">
    <property type="organism name" value="mouse"/>
</dbReference>
<dbReference type="AGR" id="MGI:1913625"/>
<dbReference type="CTD" id="51635"/>
<dbReference type="MGI" id="MGI:1913625">
    <property type="gene designation" value="Dhrs7"/>
</dbReference>
<dbReference type="VEuPathDB" id="HostDB:ENSMUSG00000021094"/>
<dbReference type="eggNOG" id="KOG1205">
    <property type="taxonomic scope" value="Eukaryota"/>
</dbReference>
<dbReference type="GeneTree" id="ENSGT00940000155226"/>
<dbReference type="HOGENOM" id="CLU_010194_2_1_1"/>
<dbReference type="InParanoid" id="Q9CXR1"/>
<dbReference type="OMA" id="TWAWWLT"/>
<dbReference type="OrthoDB" id="49856at9989"/>
<dbReference type="PhylomeDB" id="Q9CXR1"/>
<dbReference type="TreeFam" id="TF354276"/>
<dbReference type="BioGRID-ORCS" id="66375">
    <property type="hits" value="4 hits in 79 CRISPR screens"/>
</dbReference>
<dbReference type="ChiTaRS" id="Dhrs7">
    <property type="organism name" value="mouse"/>
</dbReference>
<dbReference type="PRO" id="PR:Q9CXR1"/>
<dbReference type="Proteomes" id="UP000000589">
    <property type="component" value="Chromosome 12"/>
</dbReference>
<dbReference type="RNAct" id="Q9CXR1">
    <property type="molecule type" value="protein"/>
</dbReference>
<dbReference type="Bgee" id="ENSMUSG00000021094">
    <property type="expression patterns" value="Expressed in granulocyte and 234 other cell types or tissues"/>
</dbReference>
<dbReference type="ExpressionAtlas" id="Q9CXR1">
    <property type="expression patterns" value="baseline and differential"/>
</dbReference>
<dbReference type="GO" id="GO:0005789">
    <property type="term" value="C:endoplasmic reticulum membrane"/>
    <property type="evidence" value="ECO:0000250"/>
    <property type="project" value="UniProtKB"/>
</dbReference>
<dbReference type="GO" id="GO:0052650">
    <property type="term" value="F:all-trans-retinol dehydrogenase (NADP+) activity"/>
    <property type="evidence" value="ECO:0000250"/>
    <property type="project" value="UniProtKB"/>
</dbReference>
<dbReference type="GO" id="GO:0004090">
    <property type="term" value="F:carbonyl reductase (NADPH) activity"/>
    <property type="evidence" value="ECO:0000250"/>
    <property type="project" value="UniProtKB"/>
</dbReference>
<dbReference type="GO" id="GO:0016616">
    <property type="term" value="F:oxidoreductase activity, acting on the CH-OH group of donors, NAD or NADP as acceptor"/>
    <property type="evidence" value="ECO:0000250"/>
    <property type="project" value="UniProtKB"/>
</dbReference>
<dbReference type="CDD" id="cd05332">
    <property type="entry name" value="11beta-HSD1_like_SDR_c"/>
    <property type="match status" value="1"/>
</dbReference>
<dbReference type="Gene3D" id="3.40.50.720">
    <property type="entry name" value="NAD(P)-binding Rossmann-like Domain"/>
    <property type="match status" value="1"/>
</dbReference>
<dbReference type="InterPro" id="IPR036291">
    <property type="entry name" value="NAD(P)-bd_dom_sf"/>
</dbReference>
<dbReference type="InterPro" id="IPR020904">
    <property type="entry name" value="Sc_DH/Rdtase_CS"/>
</dbReference>
<dbReference type="InterPro" id="IPR002347">
    <property type="entry name" value="SDR_fam"/>
</dbReference>
<dbReference type="InterPro" id="IPR053011">
    <property type="entry name" value="SDR_family_member_7"/>
</dbReference>
<dbReference type="PANTHER" id="PTHR44269">
    <property type="entry name" value="DEHYDROGENASE/REDUCTASE SDR FAMILY MEMBER 7-RELATED"/>
    <property type="match status" value="1"/>
</dbReference>
<dbReference type="PANTHER" id="PTHR44269:SF3">
    <property type="entry name" value="DEHYDROGENASE_REDUCTASE SDR FAMILY MEMBER 7"/>
    <property type="match status" value="1"/>
</dbReference>
<dbReference type="Pfam" id="PF00106">
    <property type="entry name" value="adh_short"/>
    <property type="match status" value="1"/>
</dbReference>
<dbReference type="PRINTS" id="PR00081">
    <property type="entry name" value="GDHRDH"/>
</dbReference>
<dbReference type="PRINTS" id="PR00080">
    <property type="entry name" value="SDRFAMILY"/>
</dbReference>
<dbReference type="SUPFAM" id="SSF51735">
    <property type="entry name" value="NAD(P)-binding Rossmann-fold domains"/>
    <property type="match status" value="1"/>
</dbReference>
<dbReference type="PROSITE" id="PS00061">
    <property type="entry name" value="ADH_SHORT"/>
    <property type="match status" value="1"/>
</dbReference>
<gene>
    <name evidence="6" type="primary">Dhrs7</name>
    <name type="synonym">Retsdr4</name>
</gene>
<reference key="1">
    <citation type="journal article" date="2005" name="Science">
        <title>The transcriptional landscape of the mammalian genome.</title>
        <authorList>
            <person name="Carninci P."/>
            <person name="Kasukawa T."/>
            <person name="Katayama S."/>
            <person name="Gough J."/>
            <person name="Frith M.C."/>
            <person name="Maeda N."/>
            <person name="Oyama R."/>
            <person name="Ravasi T."/>
            <person name="Lenhard B."/>
            <person name="Wells C."/>
            <person name="Kodzius R."/>
            <person name="Shimokawa K."/>
            <person name="Bajic V.B."/>
            <person name="Brenner S.E."/>
            <person name="Batalov S."/>
            <person name="Forrest A.R."/>
            <person name="Zavolan M."/>
            <person name="Davis M.J."/>
            <person name="Wilming L.G."/>
            <person name="Aidinis V."/>
            <person name="Allen J.E."/>
            <person name="Ambesi-Impiombato A."/>
            <person name="Apweiler R."/>
            <person name="Aturaliya R.N."/>
            <person name="Bailey T.L."/>
            <person name="Bansal M."/>
            <person name="Baxter L."/>
            <person name="Beisel K.W."/>
            <person name="Bersano T."/>
            <person name="Bono H."/>
            <person name="Chalk A.M."/>
            <person name="Chiu K.P."/>
            <person name="Choudhary V."/>
            <person name="Christoffels A."/>
            <person name="Clutterbuck D.R."/>
            <person name="Crowe M.L."/>
            <person name="Dalla E."/>
            <person name="Dalrymple B.P."/>
            <person name="de Bono B."/>
            <person name="Della Gatta G."/>
            <person name="di Bernardo D."/>
            <person name="Down T."/>
            <person name="Engstrom P."/>
            <person name="Fagiolini M."/>
            <person name="Faulkner G."/>
            <person name="Fletcher C.F."/>
            <person name="Fukushima T."/>
            <person name="Furuno M."/>
            <person name="Futaki S."/>
            <person name="Gariboldi M."/>
            <person name="Georgii-Hemming P."/>
            <person name="Gingeras T.R."/>
            <person name="Gojobori T."/>
            <person name="Green R.E."/>
            <person name="Gustincich S."/>
            <person name="Harbers M."/>
            <person name="Hayashi Y."/>
            <person name="Hensch T.K."/>
            <person name="Hirokawa N."/>
            <person name="Hill D."/>
            <person name="Huminiecki L."/>
            <person name="Iacono M."/>
            <person name="Ikeo K."/>
            <person name="Iwama A."/>
            <person name="Ishikawa T."/>
            <person name="Jakt M."/>
            <person name="Kanapin A."/>
            <person name="Katoh M."/>
            <person name="Kawasawa Y."/>
            <person name="Kelso J."/>
            <person name="Kitamura H."/>
            <person name="Kitano H."/>
            <person name="Kollias G."/>
            <person name="Krishnan S.P."/>
            <person name="Kruger A."/>
            <person name="Kummerfeld S.K."/>
            <person name="Kurochkin I.V."/>
            <person name="Lareau L.F."/>
            <person name="Lazarevic D."/>
            <person name="Lipovich L."/>
            <person name="Liu J."/>
            <person name="Liuni S."/>
            <person name="McWilliam S."/>
            <person name="Madan Babu M."/>
            <person name="Madera M."/>
            <person name="Marchionni L."/>
            <person name="Matsuda H."/>
            <person name="Matsuzawa S."/>
            <person name="Miki H."/>
            <person name="Mignone F."/>
            <person name="Miyake S."/>
            <person name="Morris K."/>
            <person name="Mottagui-Tabar S."/>
            <person name="Mulder N."/>
            <person name="Nakano N."/>
            <person name="Nakauchi H."/>
            <person name="Ng P."/>
            <person name="Nilsson R."/>
            <person name="Nishiguchi S."/>
            <person name="Nishikawa S."/>
            <person name="Nori F."/>
            <person name="Ohara O."/>
            <person name="Okazaki Y."/>
            <person name="Orlando V."/>
            <person name="Pang K.C."/>
            <person name="Pavan W.J."/>
            <person name="Pavesi G."/>
            <person name="Pesole G."/>
            <person name="Petrovsky N."/>
            <person name="Piazza S."/>
            <person name="Reed J."/>
            <person name="Reid J.F."/>
            <person name="Ring B.Z."/>
            <person name="Ringwald M."/>
            <person name="Rost B."/>
            <person name="Ruan Y."/>
            <person name="Salzberg S.L."/>
            <person name="Sandelin A."/>
            <person name="Schneider C."/>
            <person name="Schoenbach C."/>
            <person name="Sekiguchi K."/>
            <person name="Semple C.A."/>
            <person name="Seno S."/>
            <person name="Sessa L."/>
            <person name="Sheng Y."/>
            <person name="Shibata Y."/>
            <person name="Shimada H."/>
            <person name="Shimada K."/>
            <person name="Silva D."/>
            <person name="Sinclair B."/>
            <person name="Sperling S."/>
            <person name="Stupka E."/>
            <person name="Sugiura K."/>
            <person name="Sultana R."/>
            <person name="Takenaka Y."/>
            <person name="Taki K."/>
            <person name="Tammoja K."/>
            <person name="Tan S.L."/>
            <person name="Tang S."/>
            <person name="Taylor M.S."/>
            <person name="Tegner J."/>
            <person name="Teichmann S.A."/>
            <person name="Ueda H.R."/>
            <person name="van Nimwegen E."/>
            <person name="Verardo R."/>
            <person name="Wei C.L."/>
            <person name="Yagi K."/>
            <person name="Yamanishi H."/>
            <person name="Zabarovsky E."/>
            <person name="Zhu S."/>
            <person name="Zimmer A."/>
            <person name="Hide W."/>
            <person name="Bult C."/>
            <person name="Grimmond S.M."/>
            <person name="Teasdale R.D."/>
            <person name="Liu E.T."/>
            <person name="Brusic V."/>
            <person name="Quackenbush J."/>
            <person name="Wahlestedt C."/>
            <person name="Mattick J.S."/>
            <person name="Hume D.A."/>
            <person name="Kai C."/>
            <person name="Sasaki D."/>
            <person name="Tomaru Y."/>
            <person name="Fukuda S."/>
            <person name="Kanamori-Katayama M."/>
            <person name="Suzuki M."/>
            <person name="Aoki J."/>
            <person name="Arakawa T."/>
            <person name="Iida J."/>
            <person name="Imamura K."/>
            <person name="Itoh M."/>
            <person name="Kato T."/>
            <person name="Kawaji H."/>
            <person name="Kawagashira N."/>
            <person name="Kawashima T."/>
            <person name="Kojima M."/>
            <person name="Kondo S."/>
            <person name="Konno H."/>
            <person name="Nakano K."/>
            <person name="Ninomiya N."/>
            <person name="Nishio T."/>
            <person name="Okada M."/>
            <person name="Plessy C."/>
            <person name="Shibata K."/>
            <person name="Shiraki T."/>
            <person name="Suzuki S."/>
            <person name="Tagami M."/>
            <person name="Waki K."/>
            <person name="Watahiki A."/>
            <person name="Okamura-Oho Y."/>
            <person name="Suzuki H."/>
            <person name="Kawai J."/>
            <person name="Hayashizaki Y."/>
        </authorList>
    </citation>
    <scope>NUCLEOTIDE SEQUENCE [LARGE SCALE MRNA]</scope>
    <source>
        <strain>C57BL/6J</strain>
        <tissue>Embryonic head</tissue>
    </source>
</reference>
<reference key="2">
    <citation type="journal article" date="2004" name="Genome Res.">
        <title>The status, quality, and expansion of the NIH full-length cDNA project: the Mammalian Gene Collection (MGC).</title>
        <authorList>
            <consortium name="The MGC Project Team"/>
        </authorList>
    </citation>
    <scope>NUCLEOTIDE SEQUENCE [LARGE SCALE MRNA]</scope>
    <source>
        <strain>FVB/N</strain>
        <tissue>Mammary tumor</tissue>
    </source>
</reference>
<reference key="3">
    <citation type="journal article" date="2010" name="Cell">
        <title>A tissue-specific atlas of mouse protein phosphorylation and expression.</title>
        <authorList>
            <person name="Huttlin E.L."/>
            <person name="Jedrychowski M.P."/>
            <person name="Elias J.E."/>
            <person name="Goswami T."/>
            <person name="Rad R."/>
            <person name="Beausoleil S.A."/>
            <person name="Villen J."/>
            <person name="Haas W."/>
            <person name="Sowa M.E."/>
            <person name="Gygi S.P."/>
        </authorList>
    </citation>
    <scope>IDENTIFICATION BY MASS SPECTROMETRY [LARGE SCALE ANALYSIS]</scope>
    <source>
        <tissue>Brain</tissue>
        <tissue>Brown adipose tissue</tissue>
        <tissue>Heart</tissue>
        <tissue>Kidney</tissue>
        <tissue>Liver</tissue>
        <tissue>Lung</tissue>
        <tissue>Pancreas</tissue>
        <tissue>Spleen</tissue>
        <tissue>Testis</tissue>
    </source>
</reference>
<organism>
    <name type="scientific">Mus musculus</name>
    <name type="common">Mouse</name>
    <dbReference type="NCBI Taxonomy" id="10090"/>
    <lineage>
        <taxon>Eukaryota</taxon>
        <taxon>Metazoa</taxon>
        <taxon>Chordata</taxon>
        <taxon>Craniata</taxon>
        <taxon>Vertebrata</taxon>
        <taxon>Euteleostomi</taxon>
        <taxon>Mammalia</taxon>
        <taxon>Eutheria</taxon>
        <taxon>Euarchontoglires</taxon>
        <taxon>Glires</taxon>
        <taxon>Rodentia</taxon>
        <taxon>Myomorpha</taxon>
        <taxon>Muroidea</taxon>
        <taxon>Muridae</taxon>
        <taxon>Murinae</taxon>
        <taxon>Mus</taxon>
        <taxon>Mus</taxon>
    </lineage>
</organism>
<sequence>MSWELLLWLLALCALILPLVQLLRFLRADADLTLLWAEWQGRRPEWELTDMVVWVTGASSGIGEELAFQLSKLGVSLVLSARRAQELERVKRRCLENGNLKEKDILVLPLDLTDTSSHEAATKAVLQEFGKIDILVNNGGRSQRSLVLETNLDVFKELINLNYIGTVSLTKCVLPHMIERKQGKIVTVNSIAGIASVSLSSGYCASKHALRGFFNALHSELGQYPGITFCNVYPGPVQSDIVKNAFTEEVTKSMRNNIDQSYKMPTSRCVRLMLISMANDLKEVWISDHPVLLGAYIWQYMPTWAAWLNCKLGKERIQNFKNNLDPDLPYKFLKAKKD</sequence>
<accession>Q9CXR1</accession>
<evidence type="ECO:0000250" key="1">
    <source>
        <dbReference type="UniProtKB" id="Q99714"/>
    </source>
</evidence>
<evidence type="ECO:0000250" key="2">
    <source>
        <dbReference type="UniProtKB" id="Q9Y394"/>
    </source>
</evidence>
<evidence type="ECO:0000255" key="3"/>
<evidence type="ECO:0000255" key="4">
    <source>
        <dbReference type="PROSITE-ProRule" id="PRU10001"/>
    </source>
</evidence>
<evidence type="ECO:0000305" key="5"/>
<evidence type="ECO:0000312" key="6">
    <source>
        <dbReference type="MGI" id="MGI:1913625"/>
    </source>
</evidence>
<comment type="function">
    <text evidence="2">NADPH-dependent oxidoreductase which catalyzes the reduction of a variety of compounds bearing carbonyl groups including steroids, retinoids and xenobiotics. Catalyzes the reduction/inactivation of 5alpha-dihydrotestosterone to 3alpha-androstanediol, with a possible role in the modulation of androgen receptor function. Involved in the reduction of all-trans-retinal to all-trans-retinol. Converts cortisone to 20beta-dihydrocortisone in vitro, although the physiological relevance of this activity is questionable. Reduces exogenous compounds such as quinones (1,2-naphtoquinone, 9,10-phenantrenequinone and benzoquinone) and other xenobiotics (alpha-diketones) in vitro, suggesting a role in the biotransformation of xenobiotics with carbonyl group. A dehydrogenase activity has not been detected so far. May play a role as tumor suppressor.</text>
</comment>
<comment type="catalytic activity">
    <reaction evidence="2">
        <text>all-trans-retinol + NADP(+) = all-trans-retinal + NADPH + H(+)</text>
        <dbReference type="Rhea" id="RHEA:25033"/>
        <dbReference type="ChEBI" id="CHEBI:15378"/>
        <dbReference type="ChEBI" id="CHEBI:17336"/>
        <dbReference type="ChEBI" id="CHEBI:17898"/>
        <dbReference type="ChEBI" id="CHEBI:57783"/>
        <dbReference type="ChEBI" id="CHEBI:58349"/>
    </reaction>
    <physiologicalReaction direction="right-to-left" evidence="2">
        <dbReference type="Rhea" id="RHEA:25035"/>
    </physiologicalReaction>
</comment>
<comment type="catalytic activity">
    <reaction evidence="2">
        <text>5alpha-androstane-3alpha,17beta-diol + NADP(+) = 17beta-hydroxy-5alpha-androstan-3-one + NADPH + H(+)</text>
        <dbReference type="Rhea" id="RHEA:42116"/>
        <dbReference type="ChEBI" id="CHEBI:15378"/>
        <dbReference type="ChEBI" id="CHEBI:16330"/>
        <dbReference type="ChEBI" id="CHEBI:36713"/>
        <dbReference type="ChEBI" id="CHEBI:57783"/>
        <dbReference type="ChEBI" id="CHEBI:58349"/>
    </reaction>
    <physiologicalReaction direction="right-to-left" evidence="2">
        <dbReference type="Rhea" id="RHEA:42118"/>
    </physiologicalReaction>
</comment>
<comment type="subcellular location">
    <subcellularLocation>
        <location evidence="2">Endoplasmic reticulum membrane</location>
    </subcellularLocation>
    <text evidence="2">Bound to the endoplasmic reticulum membrane, possibly through a N-terminus anchor. The main bulk of the polypeptide chain was first reported to be facing toward the lumen of the endoplasmic reticulum. However, it was later shown to be facing the cytosol.</text>
</comment>
<comment type="similarity">
    <text evidence="5">Belongs to the short-chain dehydrogenases/reductases (SDR) family.</text>
</comment>
<comment type="caution">
    <text evidence="2">DHRS7 was originally reported to be anchored in the endoplasmic reticulum membrane and facing the lumen (By similarity). However, the catalytic moiety was later shown to be facing the cytosol (By similarity).</text>
</comment>
<comment type="sequence caution" evidence="5">
    <conflict type="erroneous initiation">
        <sequence resource="EMBL-CDS" id="AAH16189"/>
    </conflict>
</comment>
<comment type="sequence caution" evidence="5">
    <conflict type="frameshift">
        <sequence resource="EMBL-CDS" id="BAB29156"/>
    </conflict>
</comment>
<name>DHRS7_MOUSE</name>
<protein>
    <recommendedName>
        <fullName evidence="2">Dehydrogenase/reductase SDR family member 7</fullName>
        <ecNumber evidence="2">1.1.1.-</ecNumber>
    </recommendedName>
    <alternativeName>
        <fullName evidence="2">Retinal short-chain dehydrogenase/reductase 4</fullName>
        <shortName evidence="2">retSDR4</shortName>
    </alternativeName>
    <alternativeName>
        <fullName evidence="2">Short chain dehydrogenase/reductase family 34C member 1</fullName>
        <shortName evidence="2">Protein SDR34C1</shortName>
    </alternativeName>
</protein>
<feature type="signal peptide" evidence="3">
    <location>
        <begin position="1"/>
        <end position="28"/>
    </location>
</feature>
<feature type="chain" id="PRO_0000031969" description="Dehydrogenase/reductase SDR family member 7">
    <location>
        <begin position="29"/>
        <end position="338"/>
    </location>
</feature>
<feature type="active site" description="Proton acceptor" evidence="4">
    <location>
        <position position="203"/>
    </location>
</feature>
<feature type="binding site" evidence="1">
    <location>
        <position position="60"/>
    </location>
    <ligand>
        <name>NAD(+)</name>
        <dbReference type="ChEBI" id="CHEBI:57540"/>
    </ligand>
</feature>
<feature type="binding site" evidence="1">
    <location>
        <position position="62"/>
    </location>
    <ligand>
        <name>NAD(+)</name>
        <dbReference type="ChEBI" id="CHEBI:57540"/>
    </ligand>
</feature>
<feature type="binding site" evidence="1">
    <location>
        <position position="190"/>
    </location>
    <ligand>
        <name>substrate</name>
    </ligand>
</feature>
<feature type="binding site" evidence="1">
    <location>
        <position position="203"/>
    </location>
    <ligand>
        <name>NAD(+)</name>
        <dbReference type="ChEBI" id="CHEBI:57540"/>
    </ligand>
</feature>
<feature type="binding site" evidence="1">
    <location>
        <position position="207"/>
    </location>
    <ligand>
        <name>NAD(+)</name>
        <dbReference type="ChEBI" id="CHEBI:57540"/>
    </ligand>
</feature>
<feature type="binding site" evidence="1">
    <location>
        <position position="239"/>
    </location>
    <ligand>
        <name>NAD(+)</name>
        <dbReference type="ChEBI" id="CHEBI:57540"/>
    </ligand>
</feature>
<feature type="sequence conflict" description="In Ref. 1." evidence="5" ref="1">
    <original>L</original>
    <variation>R</variation>
    <location>
        <position position="10"/>
    </location>
</feature>